<keyword id="KW-0002">3D-structure</keyword>
<keyword id="KW-0007">Acetylation</keyword>
<keyword id="KW-0025">Alternative splicing</keyword>
<keyword id="KW-0963">Cytoplasm</keyword>
<keyword id="KW-1017">Isopeptide bond</keyword>
<keyword id="KW-0488">Methylation</keyword>
<keyword id="KW-0539">Nucleus</keyword>
<keyword id="KW-0597">Phosphoprotein</keyword>
<keyword id="KW-1267">Proteomics identification</keyword>
<keyword id="KW-1185">Reference proteome</keyword>
<keyword id="KW-0677">Repeat</keyword>
<keyword id="KW-0694">RNA-binding</keyword>
<keyword id="KW-0832">Ubl conjugation</keyword>
<evidence type="ECO:0000250" key="1">
    <source>
        <dbReference type="UniProtKB" id="P70372"/>
    </source>
</evidence>
<evidence type="ECO:0000255" key="2">
    <source>
        <dbReference type="PROSITE-ProRule" id="PRU00176"/>
    </source>
</evidence>
<evidence type="ECO:0000269" key="3">
    <source>
    </source>
</evidence>
<evidence type="ECO:0000269" key="4">
    <source>
    </source>
</evidence>
<evidence type="ECO:0000269" key="5">
    <source>
    </source>
</evidence>
<evidence type="ECO:0000269" key="6">
    <source>
    </source>
</evidence>
<evidence type="ECO:0000269" key="7">
    <source>
    </source>
</evidence>
<evidence type="ECO:0000269" key="8">
    <source>
    </source>
</evidence>
<evidence type="ECO:0000269" key="9">
    <source>
    </source>
</evidence>
<evidence type="ECO:0000269" key="10">
    <source>
    </source>
</evidence>
<evidence type="ECO:0000269" key="11">
    <source>
    </source>
</evidence>
<evidence type="ECO:0000269" key="12">
    <source>
    </source>
</evidence>
<evidence type="ECO:0000269" key="13">
    <source>
    </source>
</evidence>
<evidence type="ECO:0000269" key="14">
    <source>
    </source>
</evidence>
<evidence type="ECO:0000269" key="15">
    <source>
    </source>
</evidence>
<evidence type="ECO:0000269" key="16">
    <source>
    </source>
</evidence>
<evidence type="ECO:0000269" key="17">
    <source>
    </source>
</evidence>
<evidence type="ECO:0000269" key="18">
    <source>
    </source>
</evidence>
<evidence type="ECO:0000269" key="19">
    <source>
    </source>
</evidence>
<evidence type="ECO:0000269" key="20">
    <source>
    </source>
</evidence>
<evidence type="ECO:0000269" key="21">
    <source>
    </source>
</evidence>
<evidence type="ECO:0000269" key="22">
    <source>
    </source>
</evidence>
<evidence type="ECO:0000269" key="23">
    <source>
    </source>
</evidence>
<evidence type="ECO:0000303" key="24">
    <source>
    </source>
</evidence>
<evidence type="ECO:0000303" key="25">
    <source>
    </source>
</evidence>
<evidence type="ECO:0000305" key="26"/>
<evidence type="ECO:0000305" key="27">
    <source>
    </source>
</evidence>
<evidence type="ECO:0007744" key="28">
    <source>
    </source>
</evidence>
<evidence type="ECO:0007744" key="29">
    <source>
    </source>
</evidence>
<evidence type="ECO:0007744" key="30">
    <source>
    </source>
</evidence>
<evidence type="ECO:0007744" key="31">
    <source>
    </source>
</evidence>
<evidence type="ECO:0007744" key="32">
    <source>
    </source>
</evidence>
<evidence type="ECO:0007744" key="33">
    <source>
    </source>
</evidence>
<evidence type="ECO:0007744" key="34">
    <source>
    </source>
</evidence>
<evidence type="ECO:0007829" key="35">
    <source>
        <dbReference type="PDB" id="4ED5"/>
    </source>
</evidence>
<evidence type="ECO:0007829" key="36">
    <source>
        <dbReference type="PDB" id="4FXV"/>
    </source>
</evidence>
<evidence type="ECO:0007829" key="37">
    <source>
        <dbReference type="PDB" id="5SZW"/>
    </source>
</evidence>
<evidence type="ECO:0007829" key="38">
    <source>
        <dbReference type="PDB" id="6GD3"/>
    </source>
</evidence>
<organism>
    <name type="scientific">Homo sapiens</name>
    <name type="common">Human</name>
    <dbReference type="NCBI Taxonomy" id="9606"/>
    <lineage>
        <taxon>Eukaryota</taxon>
        <taxon>Metazoa</taxon>
        <taxon>Chordata</taxon>
        <taxon>Craniata</taxon>
        <taxon>Vertebrata</taxon>
        <taxon>Euteleostomi</taxon>
        <taxon>Mammalia</taxon>
        <taxon>Eutheria</taxon>
        <taxon>Euarchontoglires</taxon>
        <taxon>Primates</taxon>
        <taxon>Haplorrhini</taxon>
        <taxon>Catarrhini</taxon>
        <taxon>Hominidae</taxon>
        <taxon>Homo</taxon>
    </lineage>
</organism>
<feature type="initiator methionine" description="Removed" evidence="31">
    <location>
        <position position="1"/>
    </location>
</feature>
<feature type="chain" id="PRO_0000081577" description="ELAV-like protein 1">
    <location>
        <begin position="2"/>
        <end position="326"/>
    </location>
</feature>
<feature type="domain" description="RRM 1" evidence="2">
    <location>
        <begin position="20"/>
        <end position="98"/>
    </location>
</feature>
<feature type="domain" description="RRM 2" evidence="2">
    <location>
        <begin position="106"/>
        <end position="186"/>
    </location>
</feature>
<feature type="domain" description="RRM 3" evidence="2">
    <location>
        <begin position="244"/>
        <end position="322"/>
    </location>
</feature>
<feature type="modified residue" description="N-acetylserine" evidence="31">
    <location>
        <position position="2"/>
    </location>
</feature>
<feature type="modified residue" description="Phosphoserine" evidence="31">
    <location>
        <position position="2"/>
    </location>
</feature>
<feature type="modified residue" description="Phosphoserine" evidence="32">
    <location>
        <position position="100"/>
    </location>
</feature>
<feature type="modified residue" description="Phosphoserine" evidence="27">
    <location>
        <position position="158"/>
    </location>
</feature>
<feature type="modified residue" description="Phosphoserine" evidence="32">
    <location>
        <position position="197"/>
    </location>
</feature>
<feature type="modified residue" description="Phosphoserine" evidence="28 29 30 31 32">
    <location>
        <position position="202"/>
    </location>
</feature>
<feature type="modified residue" description="Omega-N-methylarginine" evidence="1">
    <location>
        <position position="206"/>
    </location>
</feature>
<feature type="modified residue" description="Asymmetric dimethylarginine; by CARM1; alternate" evidence="4">
    <location>
        <position position="217"/>
    </location>
</feature>
<feature type="modified residue" description="Omega-N-methylarginine; alternate" evidence="33">
    <location>
        <position position="217"/>
    </location>
</feature>
<feature type="modified residue" description="Phosphoserine" evidence="27">
    <location>
        <position position="221"/>
    </location>
</feature>
<feature type="modified residue" description="Phosphoserine" evidence="27">
    <location>
        <position position="318"/>
    </location>
</feature>
<feature type="cross-link" description="Glycyl lysine isopeptide (Lys-Gly) (interchain with G-Cter in SUMO2)" evidence="34">
    <location>
        <position position="191"/>
    </location>
</feature>
<feature type="splice variant" id="VSP_056148" description="In isoform 2." evidence="24">
    <original>M</original>
    <variation>MGSGGRSAQVSTGQRAWLLPCRFLKNTM</variation>
    <location>
        <position position="1"/>
    </location>
</feature>
<feature type="mutagenesis site" description="Decreases phosphorylation by PRKCD." evidence="11">
    <original>S</original>
    <variation>A</variation>
    <location>
        <position position="158"/>
    </location>
</feature>
<feature type="mutagenesis site" description="Decreases phosphorylation by PRKCD. Nearly abolishes phosphorylation by PRKCD and translocation from the nucleus into the cytoplasm; when associated with A-318." evidence="11">
    <original>S</original>
    <variation>A</variation>
    <location>
        <position position="221"/>
    </location>
</feature>
<feature type="mutagenesis site" description="Decreases phosphorylation by PRKCD. Nearly abolishes phosphorylation by PRKCD and translocation from the nucleus into the cytoplasm; when associated with A-221." evidence="11">
    <original>S</original>
    <variation>A</variation>
    <location>
        <position position="318"/>
    </location>
</feature>
<feature type="sequence conflict" description="In Ref. 1; AAB41913." evidence="26" ref="1">
    <original>T</original>
    <variation>A</variation>
    <location>
        <position position="180"/>
    </location>
</feature>
<feature type="turn" evidence="37">
    <location>
        <begin position="7"/>
        <end position="10"/>
    </location>
</feature>
<feature type="strand" evidence="36">
    <location>
        <begin position="20"/>
        <end position="26"/>
    </location>
</feature>
<feature type="helix" evidence="36">
    <location>
        <begin position="33"/>
        <end position="41"/>
    </location>
</feature>
<feature type="strand" evidence="36">
    <location>
        <begin position="46"/>
        <end position="53"/>
    </location>
</feature>
<feature type="strand" evidence="36">
    <location>
        <begin position="55"/>
        <end position="57"/>
    </location>
</feature>
<feature type="strand" evidence="36">
    <location>
        <begin position="60"/>
        <end position="70"/>
    </location>
</feature>
<feature type="helix" evidence="36">
    <location>
        <begin position="71"/>
        <end position="81"/>
    </location>
</feature>
<feature type="strand" evidence="36">
    <location>
        <begin position="92"/>
        <end position="95"/>
    </location>
</feature>
<feature type="helix" evidence="35">
    <location>
        <begin position="101"/>
        <end position="103"/>
    </location>
</feature>
<feature type="strand" evidence="35">
    <location>
        <begin position="107"/>
        <end position="111"/>
    </location>
</feature>
<feature type="helix" evidence="35">
    <location>
        <begin position="119"/>
        <end position="126"/>
    </location>
</feature>
<feature type="helix" evidence="35">
    <location>
        <begin position="127"/>
        <end position="129"/>
    </location>
</feature>
<feature type="strand" evidence="35">
    <location>
        <begin position="132"/>
        <end position="139"/>
    </location>
</feature>
<feature type="turn" evidence="35">
    <location>
        <begin position="141"/>
        <end position="143"/>
    </location>
</feature>
<feature type="strand" evidence="35">
    <location>
        <begin position="146"/>
        <end position="156"/>
    </location>
</feature>
<feature type="helix" evidence="35">
    <location>
        <begin position="157"/>
        <end position="167"/>
    </location>
</feature>
<feature type="strand" evidence="35">
    <location>
        <begin position="180"/>
        <end position="183"/>
    </location>
</feature>
<feature type="strand" evidence="38">
    <location>
        <begin position="244"/>
        <end position="249"/>
    </location>
</feature>
<feature type="helix" evidence="38">
    <location>
        <begin position="257"/>
        <end position="264"/>
    </location>
</feature>
<feature type="helix" evidence="38">
    <location>
        <begin position="265"/>
        <end position="267"/>
    </location>
</feature>
<feature type="strand" evidence="38">
    <location>
        <begin position="270"/>
        <end position="277"/>
    </location>
</feature>
<feature type="turn" evidence="38">
    <location>
        <begin position="279"/>
        <end position="281"/>
    </location>
</feature>
<feature type="strand" evidence="38">
    <location>
        <begin position="283"/>
        <end position="293"/>
    </location>
</feature>
<feature type="helix" evidence="38">
    <location>
        <begin position="295"/>
        <end position="305"/>
    </location>
</feature>
<feature type="strand" evidence="38">
    <location>
        <begin position="316"/>
        <end position="318"/>
    </location>
</feature>
<comment type="function">
    <text evidence="1 5 6 7 11 12 14 18 21 22 23">RNA-binding protein that binds to the 3'-UTR region of mRNAs and increases their stability (PubMed:14517288, PubMed:18285462, PubMed:31358969). Involved in embryonic stem cell (ESC) differentiation: preferentially binds mRNAs that are not methylated by N6-methyladenosine (m6A), stabilizing them, promoting ESC differentiation (By similarity). Has also been shown to be capable of binding to m6A-containing mRNAs and contributes to MYC stability by binding to m6A-containing MYC mRNAs (PubMed:32245947). Binds to poly-U elements and AU-rich elements (AREs) in the 3'-UTR of target mRNAs (PubMed:14731398, PubMed:17632515, PubMed:18285462, PubMed:23519412, PubMed:8626503). Binds avidly to the AU-rich element in FOS and IL3/interleukin-3 mRNAs. In the case of the FOS AU-rich element, binds to a core element of 27 nucleotides that contain AUUUA, AUUUUA, and AUUUUUA motifs. Binds preferentially to the 5'-UUUU[AG]UUU-3' motif in vitro (PubMed:8626503). With ZNF385A, binds the 3'-UTR of p53/TP53 mRNA to control their nuclear export induced by CDKN2A. Hence, may regulate p53/TP53 expression and mediate in part the CDKN2A anti-proliferative activity. May also bind with ZNF385A the CCNB1 mRNA (By similarity). Increases the stability of the leptin mRNA harboring an AU-rich element (ARE) in its 3' UTR (PubMed:29180010).</text>
</comment>
<comment type="subunit">
    <text evidence="1 3 6 7 8 9 10 12 13 15 16 17 20 22">Monomer and homodimer (in vitro) (PubMed:17632515, PubMed:20219472). Interacts with ANP32A (PubMed:11729309). Interacts with ZNF385A; the interaction is indirect and mRNA-dependent and may regulate p53/TP53 expression (By similarity). Identified in a mRNP complex, at least composed of DHX9, DDX3X, ELAVL1, HNRNPU, IGF2BP1, ILF3, PABPC1, PCBP2, PTBP2, STAU1, STAU2, SYNCRIP and YBX1 (PubMed:19029303). Interacts with AGO1 and AGO2 (PubMed:17932509). Interacts with IGF2BP1; the interaction is enhanced by SEPIN14P20 peptide RBPR (PubMed:29476152, PubMed:32245947). Interacts with IGF2BP2 and IGF2BP3 (PubMed:23640942, PubMed:29476152). Interacts with HNRNPL (PubMed:18161049). Interacts with DHX36; this interaction occurs in a RNA-dependent manner (PubMed:14731398). Interacts with ILF3; this interaction occurs in a RNA-dependent manner (PubMed:14731398). Interacts with PLEKHN1 (PubMed:18191643, PubMed:27616329). Interacts with SHFL; the interaction increases in presence of RNA (PubMed:27974568). Interacts with YBX1; interaction recruits ELAVL1 on C5-methylcytosine (m5C)-containing mRNAs, thereby promoting mRNA stability (PubMed:31358969). Interacts with FXR1 (PubMed:30067974).</text>
</comment>
<comment type="interaction">
    <interactant intactId="EBI-374260">
        <id>Q15717</id>
    </interactant>
    <interactant intactId="EBI-930964">
        <id>P54253</id>
        <label>ATXN1</label>
    </interactant>
    <organismsDiffer>false</organismsDiffer>
    <experiments>7</experiments>
</comment>
<comment type="interaction">
    <interactant intactId="EBI-374260">
        <id>Q15717</id>
    </interactant>
    <interactant intactId="EBI-727004">
        <id>O00560</id>
        <label>SDCBP</label>
    </interactant>
    <organismsDiffer>false</organismsDiffer>
    <experiments>3</experiments>
</comment>
<comment type="interaction">
    <interactant intactId="EBI-374260">
        <id>Q15717</id>
    </interactant>
    <interactant intactId="EBI-372899">
        <id>Q13148</id>
        <label>TARDBP</label>
    </interactant>
    <organismsDiffer>false</organismsDiffer>
    <experiments>7</experiments>
</comment>
<comment type="interaction">
    <interactant intactId="EBI-374260">
        <id>Q15717</id>
    </interactant>
    <interactant intactId="EBI-3390054">
        <id>P0CG48</id>
        <label>UBC</label>
    </interactant>
    <organismsDiffer>false</organismsDiffer>
    <experiments>4</experiments>
</comment>
<comment type="subcellular location">
    <subcellularLocation>
        <location evidence="5 7 11 12">Cytoplasm</location>
    </subcellularLocation>
    <subcellularLocation>
        <location evidence="5 7 11">Nucleus</location>
    </subcellularLocation>
    <subcellularLocation>
        <location evidence="1">Cytoplasm</location>
        <location evidence="1">Stress granule</location>
    </subcellularLocation>
    <subcellularLocation>
        <location evidence="19">Cytoplasm</location>
        <location evidence="19">P-body</location>
    </subcellularLocation>
    <text evidence="1 5 11">Translocates into the cytoplasm following phosphorylation by MAPKAPK2 (PubMed:14517288). Likewise, phosphorylation by PRKCD promotes translocation from the nucleus into the cytoplasm, where it is associated with free and cytoskeleton-bound polysomes (PubMed:18285462). Localizes to the stress granules in the presence of PLEKHN1 (By similarity).</text>
</comment>
<comment type="alternative products">
    <event type="alternative splicing"/>
    <isoform>
        <id>Q15717-1</id>
        <name>1</name>
        <sequence type="displayed"/>
    </isoform>
    <isoform>
        <id>Q15717-2</id>
        <name>2</name>
        <sequence type="described" ref="VSP_056148"/>
    </isoform>
</comment>
<comment type="tissue specificity">
    <text evidence="23">Ubiquitous. Detected in brain, liver, thymus and muscle.</text>
</comment>
<comment type="domain">
    <text evidence="14">The first RRM (RNA recognition motif) domain is essential for binding to AU-rich elements.</text>
</comment>
<comment type="PTM">
    <text evidence="5 11">Phosphorylated by MAPKAPK2 (PubMed:14517288). Phosphorylated by PRKCD (PubMed:18285462).</text>
</comment>
<comment type="PTM">
    <text evidence="4">Methylated at Arg-217 by CARM1 in macrophages in response to LPS challenge.</text>
</comment>
<comment type="similarity">
    <text evidence="26">Belongs to the RRM elav family.</text>
</comment>
<comment type="online information" name="Atlas of Genetics and Cytogenetics in Oncology and Haematology">
    <link uri="https://atlasgeneticsoncology.org/gene/44237/ELAVL1"/>
</comment>
<accession>Q15717</accession>
<accession>B4DVB8</accession>
<accession>Q53XN6</accession>
<accession>Q9BTT1</accession>
<name>ELAV1_HUMAN</name>
<sequence length="326" mass="36092">MSNGYEDHMAEDCRGDIGRTNLIVNYLPQNMTQDELRSLFSSIGEVESAKLIRDKVAGHSLGYGFVNYVTAKDAERAINTLNGLRLQSKTIKVSYARPSSEVIKDANLYISGLPRTMTQKDVEDMFSRFGRIINSRVLVDQTTGLSRGVAFIRFDKRSEAEEAITSFNGHKPPGSSEPITVKFAANPNQNKNVALLSQLYHSPARRFGGPVHHQAQRFRFSPMGVDHMSGLSGVNVPGNASSGWCIFIYNLGQDADEGILWQMFGPFGAVTNVKVIRDFNTNKCKGFGFVTMTNYEEAAMAIASLNGYRLGDKILQVSFKTNKSHK</sequence>
<dbReference type="EMBL" id="U38175">
    <property type="protein sequence ID" value="AAB41913.1"/>
    <property type="molecule type" value="mRNA"/>
</dbReference>
<dbReference type="EMBL" id="BT009793">
    <property type="protein sequence ID" value="AAP88795.1"/>
    <property type="molecule type" value="mRNA"/>
</dbReference>
<dbReference type="EMBL" id="AK301013">
    <property type="protein sequence ID" value="BAG62630.1"/>
    <property type="molecule type" value="mRNA"/>
</dbReference>
<dbReference type="EMBL" id="AC008975">
    <property type="status" value="NOT_ANNOTATED_CDS"/>
    <property type="molecule type" value="Genomic_DNA"/>
</dbReference>
<dbReference type="EMBL" id="AC010336">
    <property type="status" value="NOT_ANNOTATED_CDS"/>
    <property type="molecule type" value="Genomic_DNA"/>
</dbReference>
<dbReference type="EMBL" id="CH471139">
    <property type="protein sequence ID" value="EAW68949.1"/>
    <property type="molecule type" value="Genomic_DNA"/>
</dbReference>
<dbReference type="EMBL" id="BC003376">
    <property type="protein sequence ID" value="AAH03376.1"/>
    <property type="molecule type" value="mRNA"/>
</dbReference>
<dbReference type="CCDS" id="CCDS12193.1">
    <molecule id="Q15717-1"/>
</dbReference>
<dbReference type="RefSeq" id="NP_001410.2">
    <molecule id="Q15717-1"/>
    <property type="nucleotide sequence ID" value="NM_001419.2"/>
</dbReference>
<dbReference type="RefSeq" id="XP_047294339.1">
    <molecule id="Q15717-2"/>
    <property type="nucleotide sequence ID" value="XM_047438383.1"/>
</dbReference>
<dbReference type="RefSeq" id="XP_054176123.1">
    <molecule id="Q15717-2"/>
    <property type="nucleotide sequence ID" value="XM_054320148.1"/>
</dbReference>
<dbReference type="PDB" id="3HI9">
    <property type="method" value="X-ray"/>
    <property type="resolution" value="2.00 A"/>
    <property type="chains" value="A/B/C/D=18-99"/>
</dbReference>
<dbReference type="PDB" id="4ED5">
    <property type="method" value="X-ray"/>
    <property type="resolution" value="2.00 A"/>
    <property type="chains" value="A/B=18-186"/>
</dbReference>
<dbReference type="PDB" id="4EGL">
    <property type="method" value="X-ray"/>
    <property type="resolution" value="2.90 A"/>
    <property type="chains" value="A=18-186"/>
</dbReference>
<dbReference type="PDB" id="4FXV">
    <property type="method" value="X-ray"/>
    <property type="resolution" value="1.90 A"/>
    <property type="chains" value="A/B/C/D=20-99"/>
</dbReference>
<dbReference type="PDB" id="5SZW">
    <property type="method" value="NMR"/>
    <property type="chains" value="A=1-99"/>
</dbReference>
<dbReference type="PDB" id="6G2K">
    <property type="method" value="X-ray"/>
    <property type="resolution" value="2.01 A"/>
    <property type="chains" value="A/B/C=243-326"/>
</dbReference>
<dbReference type="PDB" id="6GC5">
    <property type="method" value="X-ray"/>
    <property type="resolution" value="1.90 A"/>
    <property type="chains" value="A/B/C/D=241-326"/>
</dbReference>
<dbReference type="PDB" id="6GD1">
    <property type="method" value="X-ray"/>
    <property type="resolution" value="2.01 A"/>
    <property type="chains" value="A/B=243-326"/>
</dbReference>
<dbReference type="PDB" id="6GD2">
    <property type="method" value="X-ray"/>
    <property type="resolution" value="1.90 A"/>
    <property type="chains" value="A/B/C=243-326"/>
</dbReference>
<dbReference type="PDB" id="6GD3">
    <property type="method" value="X-ray"/>
    <property type="resolution" value="1.35 A"/>
    <property type="chains" value="A/B/C=243-326"/>
</dbReference>
<dbReference type="PDBsum" id="3HI9"/>
<dbReference type="PDBsum" id="4ED5"/>
<dbReference type="PDBsum" id="4EGL"/>
<dbReference type="PDBsum" id="4FXV"/>
<dbReference type="PDBsum" id="5SZW"/>
<dbReference type="PDBsum" id="6G2K"/>
<dbReference type="PDBsum" id="6GC5"/>
<dbReference type="PDBsum" id="6GD1"/>
<dbReference type="PDBsum" id="6GD2"/>
<dbReference type="PDBsum" id="6GD3"/>
<dbReference type="SMR" id="Q15717"/>
<dbReference type="BioGRID" id="108309">
    <property type="interactions" value="2044"/>
</dbReference>
<dbReference type="CORUM" id="Q15717"/>
<dbReference type="DIP" id="DIP-31291N"/>
<dbReference type="FunCoup" id="Q15717">
    <property type="interactions" value="3895"/>
</dbReference>
<dbReference type="IntAct" id="Q15717">
    <property type="interactions" value="138"/>
</dbReference>
<dbReference type="MINT" id="Q15717"/>
<dbReference type="STRING" id="9606.ENSP00000385269"/>
<dbReference type="BindingDB" id="Q15717"/>
<dbReference type="ChEMBL" id="CHEMBL1250379"/>
<dbReference type="DrugCentral" id="Q15717"/>
<dbReference type="GlyGen" id="Q15717">
    <property type="glycosylation" value="1 site, 1 O-linked glycan (1 site)"/>
</dbReference>
<dbReference type="iPTMnet" id="Q15717"/>
<dbReference type="MetOSite" id="Q15717"/>
<dbReference type="PhosphoSitePlus" id="Q15717"/>
<dbReference type="SwissPalm" id="Q15717"/>
<dbReference type="BioMuta" id="ELAVL1"/>
<dbReference type="DMDM" id="20981691"/>
<dbReference type="CPTAC" id="CPTAC-923"/>
<dbReference type="jPOST" id="Q15717"/>
<dbReference type="MassIVE" id="Q15717"/>
<dbReference type="PaxDb" id="9606-ENSP00000385269"/>
<dbReference type="PeptideAtlas" id="Q15717"/>
<dbReference type="ProteomicsDB" id="60716">
    <molecule id="Q15717-1"/>
</dbReference>
<dbReference type="Pumba" id="Q15717"/>
<dbReference type="Antibodypedia" id="3933">
    <property type="antibodies" value="493 antibodies from 37 providers"/>
</dbReference>
<dbReference type="DNASU" id="1994"/>
<dbReference type="Ensembl" id="ENST00000407627.7">
    <molecule id="Q15717-1"/>
    <property type="protein sequence ID" value="ENSP00000385269.1"/>
    <property type="gene ID" value="ENSG00000066044.15"/>
</dbReference>
<dbReference type="Ensembl" id="ENST00000596459.5">
    <molecule id="Q15717-1"/>
    <property type="protein sequence ID" value="ENSP00000472197.1"/>
    <property type="gene ID" value="ENSG00000066044.15"/>
</dbReference>
<dbReference type="GeneID" id="1994"/>
<dbReference type="KEGG" id="hsa:1994"/>
<dbReference type="MANE-Select" id="ENST00000407627.7">
    <property type="protein sequence ID" value="ENSP00000385269.1"/>
    <property type="RefSeq nucleotide sequence ID" value="NM_001419.3"/>
    <property type="RefSeq protein sequence ID" value="NP_001410.2"/>
</dbReference>
<dbReference type="UCSC" id="uc002mjb.4">
    <molecule id="Q15717-1"/>
    <property type="organism name" value="human"/>
</dbReference>
<dbReference type="AGR" id="HGNC:3312"/>
<dbReference type="CTD" id="1994"/>
<dbReference type="DisGeNET" id="1994"/>
<dbReference type="GeneCards" id="ELAVL1"/>
<dbReference type="HGNC" id="HGNC:3312">
    <property type="gene designation" value="ELAVL1"/>
</dbReference>
<dbReference type="HPA" id="ENSG00000066044">
    <property type="expression patterns" value="Low tissue specificity"/>
</dbReference>
<dbReference type="MIM" id="603466">
    <property type="type" value="gene"/>
</dbReference>
<dbReference type="neXtProt" id="NX_Q15717"/>
<dbReference type="OpenTargets" id="ENSG00000066044"/>
<dbReference type="PharmGKB" id="PA27740"/>
<dbReference type="VEuPathDB" id="HostDB:ENSG00000066044"/>
<dbReference type="eggNOG" id="KOG0145">
    <property type="taxonomic scope" value="Eukaryota"/>
</dbReference>
<dbReference type="GeneTree" id="ENSGT00940000155528"/>
<dbReference type="HOGENOM" id="CLU_026186_2_2_1"/>
<dbReference type="InParanoid" id="Q15717"/>
<dbReference type="OMA" id="NQMRYNN"/>
<dbReference type="OrthoDB" id="266020at2759"/>
<dbReference type="PAN-GO" id="Q15717">
    <property type="GO annotations" value="0 GO annotations based on evolutionary models"/>
</dbReference>
<dbReference type="PhylomeDB" id="Q15717"/>
<dbReference type="TreeFam" id="TF313377"/>
<dbReference type="PathwayCommons" id="Q15717"/>
<dbReference type="Reactome" id="R-HSA-450520">
    <property type="pathway name" value="HuR (ELAVL1) binds and stabilizes mRNA"/>
</dbReference>
<dbReference type="SignaLink" id="Q15717"/>
<dbReference type="SIGNOR" id="Q15717"/>
<dbReference type="BioGRID-ORCS" id="1994">
    <property type="hits" value="171 hits in 1166 CRISPR screens"/>
</dbReference>
<dbReference type="CD-CODE" id="1A0651A8">
    <property type="entry name" value="Synthetic Condensate 000370"/>
</dbReference>
<dbReference type="CD-CODE" id="232F8A39">
    <property type="entry name" value="P-body"/>
</dbReference>
<dbReference type="CD-CODE" id="44FCF654">
    <property type="entry name" value="Synthetic Condensate 000363"/>
</dbReference>
<dbReference type="CD-CODE" id="91857CE7">
    <property type="entry name" value="Nucleolus"/>
</dbReference>
<dbReference type="CD-CODE" id="DEE660B4">
    <property type="entry name" value="Stress granule"/>
</dbReference>
<dbReference type="ChiTaRS" id="ELAVL1">
    <property type="organism name" value="human"/>
</dbReference>
<dbReference type="EvolutionaryTrace" id="Q15717"/>
<dbReference type="GeneWiki" id="ELAVL1"/>
<dbReference type="GenomeRNAi" id="1994"/>
<dbReference type="Pharos" id="Q15717">
    <property type="development level" value="Tchem"/>
</dbReference>
<dbReference type="PRO" id="PR:Q15717"/>
<dbReference type="Proteomes" id="UP000005640">
    <property type="component" value="Chromosome 19"/>
</dbReference>
<dbReference type="RNAct" id="Q15717">
    <property type="molecule type" value="protein"/>
</dbReference>
<dbReference type="Bgee" id="ENSG00000066044">
    <property type="expression patterns" value="Expressed in endothelial cell and 209 other cell types or tissues"/>
</dbReference>
<dbReference type="ExpressionAtlas" id="Q15717">
    <property type="expression patterns" value="baseline and differential"/>
</dbReference>
<dbReference type="GO" id="GO:0005737">
    <property type="term" value="C:cytoplasm"/>
    <property type="evidence" value="ECO:0000314"/>
    <property type="project" value="UniProtKB"/>
</dbReference>
<dbReference type="GO" id="GO:0010494">
    <property type="term" value="C:cytoplasmic stress granule"/>
    <property type="evidence" value="ECO:0000250"/>
    <property type="project" value="UniProtKB"/>
</dbReference>
<dbReference type="GO" id="GO:0031410">
    <property type="term" value="C:cytoplasmic vesicle"/>
    <property type="evidence" value="ECO:0007669"/>
    <property type="project" value="Ensembl"/>
</dbReference>
<dbReference type="GO" id="GO:0005829">
    <property type="term" value="C:cytosol"/>
    <property type="evidence" value="ECO:0000314"/>
    <property type="project" value="UniProtKB"/>
</dbReference>
<dbReference type="GO" id="GO:0005783">
    <property type="term" value="C:endoplasmic reticulum"/>
    <property type="evidence" value="ECO:0007669"/>
    <property type="project" value="Ensembl"/>
</dbReference>
<dbReference type="GO" id="GO:0098978">
    <property type="term" value="C:glutamatergic synapse"/>
    <property type="evidence" value="ECO:0007669"/>
    <property type="project" value="Ensembl"/>
</dbReference>
<dbReference type="GO" id="GO:0016020">
    <property type="term" value="C:membrane"/>
    <property type="evidence" value="ECO:0007005"/>
    <property type="project" value="UniProtKB"/>
</dbReference>
<dbReference type="GO" id="GO:0005654">
    <property type="term" value="C:nucleoplasm"/>
    <property type="evidence" value="ECO:0000314"/>
    <property type="project" value="UniProtKB"/>
</dbReference>
<dbReference type="GO" id="GO:0005634">
    <property type="term" value="C:nucleus"/>
    <property type="evidence" value="ECO:0000314"/>
    <property type="project" value="UniProtKB"/>
</dbReference>
<dbReference type="GO" id="GO:0000932">
    <property type="term" value="C:P-body"/>
    <property type="evidence" value="ECO:0007669"/>
    <property type="project" value="UniProtKB-SubCell"/>
</dbReference>
<dbReference type="GO" id="GO:0098794">
    <property type="term" value="C:postsynapse"/>
    <property type="evidence" value="ECO:0007669"/>
    <property type="project" value="Ensembl"/>
</dbReference>
<dbReference type="GO" id="GO:1990904">
    <property type="term" value="C:ribonucleoprotein complex"/>
    <property type="evidence" value="ECO:0000250"/>
    <property type="project" value="UniProtKB"/>
</dbReference>
<dbReference type="GO" id="GO:0016528">
    <property type="term" value="C:sarcoplasm"/>
    <property type="evidence" value="ECO:0007669"/>
    <property type="project" value="Ensembl"/>
</dbReference>
<dbReference type="GO" id="GO:0003725">
    <property type="term" value="F:double-stranded RNA binding"/>
    <property type="evidence" value="ECO:0000314"/>
    <property type="project" value="MGI"/>
</dbReference>
<dbReference type="GO" id="GO:0106222">
    <property type="term" value="F:lncRNA binding"/>
    <property type="evidence" value="ECO:0007669"/>
    <property type="project" value="Ensembl"/>
</dbReference>
<dbReference type="GO" id="GO:0035198">
    <property type="term" value="F:miRNA binding"/>
    <property type="evidence" value="ECO:0000314"/>
    <property type="project" value="UniProtKB"/>
</dbReference>
<dbReference type="GO" id="GO:0035925">
    <property type="term" value="F:mRNA 3'-UTR AU-rich region binding"/>
    <property type="evidence" value="ECO:0000314"/>
    <property type="project" value="UniProtKB"/>
</dbReference>
<dbReference type="GO" id="GO:0003730">
    <property type="term" value="F:mRNA 3'-UTR binding"/>
    <property type="evidence" value="ECO:0000314"/>
    <property type="project" value="UniProtKB"/>
</dbReference>
<dbReference type="GO" id="GO:0003729">
    <property type="term" value="F:mRNA binding"/>
    <property type="evidence" value="ECO:0000304"/>
    <property type="project" value="ProtInc"/>
</dbReference>
<dbReference type="GO" id="GO:0042803">
    <property type="term" value="F:protein homodimerization activity"/>
    <property type="evidence" value="ECO:0000353"/>
    <property type="project" value="UniProtKB"/>
</dbReference>
<dbReference type="GO" id="GO:0019901">
    <property type="term" value="F:protein kinase binding"/>
    <property type="evidence" value="ECO:0000353"/>
    <property type="project" value="UniProtKB"/>
</dbReference>
<dbReference type="GO" id="GO:0003723">
    <property type="term" value="F:RNA binding"/>
    <property type="evidence" value="ECO:0000314"/>
    <property type="project" value="UniProtKB"/>
</dbReference>
<dbReference type="GO" id="GO:0070935">
    <property type="term" value="P:3'-UTR-mediated mRNA stabilization"/>
    <property type="evidence" value="ECO:0000314"/>
    <property type="project" value="UniProtKB"/>
</dbReference>
<dbReference type="GO" id="GO:0008283">
    <property type="term" value="P:cell population proliferation"/>
    <property type="evidence" value="ECO:0007669"/>
    <property type="project" value="Ensembl"/>
</dbReference>
<dbReference type="GO" id="GO:0000512">
    <property type="term" value="P:lncRNA-mediated post-transcriptional gene silencing"/>
    <property type="evidence" value="ECO:0007669"/>
    <property type="project" value="Ensembl"/>
</dbReference>
<dbReference type="GO" id="GO:0061157">
    <property type="term" value="P:mRNA destabilization"/>
    <property type="evidence" value="ECO:0007669"/>
    <property type="project" value="Ensembl"/>
</dbReference>
<dbReference type="GO" id="GO:0048255">
    <property type="term" value="P:mRNA stabilization"/>
    <property type="evidence" value="ECO:0000314"/>
    <property type="project" value="UniProtKB"/>
</dbReference>
<dbReference type="GO" id="GO:0060965">
    <property type="term" value="P:negative regulation of miRNA-mediated gene silencing"/>
    <property type="evidence" value="ECO:0000315"/>
    <property type="project" value="UniProtKB"/>
</dbReference>
<dbReference type="GO" id="GO:0045772">
    <property type="term" value="P:positive regulation of autophagosome size"/>
    <property type="evidence" value="ECO:0007669"/>
    <property type="project" value="Ensembl"/>
</dbReference>
<dbReference type="GO" id="GO:0010508">
    <property type="term" value="P:positive regulation of autophagy"/>
    <property type="evidence" value="ECO:0007669"/>
    <property type="project" value="Ensembl"/>
</dbReference>
<dbReference type="GO" id="GO:0032930">
    <property type="term" value="P:positive regulation of superoxide anion generation"/>
    <property type="evidence" value="ECO:0007669"/>
    <property type="project" value="Ensembl"/>
</dbReference>
<dbReference type="GO" id="GO:0045727">
    <property type="term" value="P:positive regulation of translation"/>
    <property type="evidence" value="ECO:0000314"/>
    <property type="project" value="MGI"/>
</dbReference>
<dbReference type="GO" id="GO:0051260">
    <property type="term" value="P:protein homooligomerization"/>
    <property type="evidence" value="ECO:0000314"/>
    <property type="project" value="UniProtKB"/>
</dbReference>
<dbReference type="GO" id="GO:0006606">
    <property type="term" value="P:protein import into nucleus"/>
    <property type="evidence" value="ECO:0007669"/>
    <property type="project" value="Ensembl"/>
</dbReference>
<dbReference type="GO" id="GO:2000036">
    <property type="term" value="P:regulation of stem cell population maintenance"/>
    <property type="evidence" value="ECO:0000250"/>
    <property type="project" value="UniProtKB"/>
</dbReference>
<dbReference type="GO" id="GO:0009749">
    <property type="term" value="P:response to glucose"/>
    <property type="evidence" value="ECO:0007669"/>
    <property type="project" value="Ensembl"/>
</dbReference>
<dbReference type="CDD" id="cd12769">
    <property type="entry name" value="RRM1_HuR"/>
    <property type="match status" value="1"/>
</dbReference>
<dbReference type="CDD" id="cd12773">
    <property type="entry name" value="RRM2_HuR"/>
    <property type="match status" value="1"/>
</dbReference>
<dbReference type="CDD" id="cd12653">
    <property type="entry name" value="RRM3_HuR"/>
    <property type="match status" value="1"/>
</dbReference>
<dbReference type="DisProt" id="DP02564"/>
<dbReference type="FunFam" id="3.30.70.330:FF:000006">
    <property type="entry name" value="ELAV-like 3"/>
    <property type="match status" value="1"/>
</dbReference>
<dbReference type="FunFam" id="3.30.70.330:FF:000005">
    <property type="entry name" value="ELAV-like protein"/>
    <property type="match status" value="1"/>
</dbReference>
<dbReference type="FunFam" id="3.30.70.330:FF:000215">
    <property type="entry name" value="ELAV-like protein"/>
    <property type="match status" value="1"/>
</dbReference>
<dbReference type="Gene3D" id="3.30.70.330">
    <property type="match status" value="3"/>
</dbReference>
<dbReference type="InterPro" id="IPR006548">
    <property type="entry name" value="ELAD_HU_SF"/>
</dbReference>
<dbReference type="InterPro" id="IPR002343">
    <property type="entry name" value="Hud_Sxl_RNA"/>
</dbReference>
<dbReference type="InterPro" id="IPR034996">
    <property type="entry name" value="HuR_RRM2"/>
</dbReference>
<dbReference type="InterPro" id="IPR012677">
    <property type="entry name" value="Nucleotide-bd_a/b_plait_sf"/>
</dbReference>
<dbReference type="InterPro" id="IPR035979">
    <property type="entry name" value="RBD_domain_sf"/>
</dbReference>
<dbReference type="InterPro" id="IPR000504">
    <property type="entry name" value="RRM_dom"/>
</dbReference>
<dbReference type="NCBIfam" id="TIGR01661">
    <property type="entry name" value="ELAV_HUD_SF"/>
    <property type="match status" value="1"/>
</dbReference>
<dbReference type="PANTHER" id="PTHR10352">
    <property type="entry name" value="EUKARYOTIC TRANSLATION INITIATION FACTOR 3 SUBUNIT G"/>
    <property type="match status" value="1"/>
</dbReference>
<dbReference type="Pfam" id="PF00076">
    <property type="entry name" value="RRM_1"/>
    <property type="match status" value="3"/>
</dbReference>
<dbReference type="PRINTS" id="PR00961">
    <property type="entry name" value="HUDSXLRNA"/>
</dbReference>
<dbReference type="SMART" id="SM00360">
    <property type="entry name" value="RRM"/>
    <property type="match status" value="3"/>
</dbReference>
<dbReference type="SUPFAM" id="SSF54928">
    <property type="entry name" value="RNA-binding domain, RBD"/>
    <property type="match status" value="2"/>
</dbReference>
<dbReference type="PROSITE" id="PS50102">
    <property type="entry name" value="RRM"/>
    <property type="match status" value="3"/>
</dbReference>
<protein>
    <recommendedName>
        <fullName>ELAV-like protein 1</fullName>
    </recommendedName>
    <alternativeName>
        <fullName>Hu-antigen R</fullName>
        <shortName evidence="25">HuR</shortName>
    </alternativeName>
</protein>
<reference key="1">
    <citation type="journal article" date="1996" name="J. Biol. Chem.">
        <title>Cloning and characterization of HuR, a ubiquitously expressed Elav-like protein.</title>
        <authorList>
            <person name="Ma W.-J."/>
            <person name="Cheng S."/>
            <person name="Campbell C."/>
            <person name="Wright A."/>
            <person name="Furneaux H.M."/>
        </authorList>
    </citation>
    <scope>NUCLEOTIDE SEQUENCE [MRNA] (ISOFORM 1)</scope>
    <scope>FUNCTION</scope>
    <scope>RNA-BINDING</scope>
    <scope>TISSUE SPECIFICITY</scope>
</reference>
<reference key="2">
    <citation type="submission" date="2003-08" db="EMBL/GenBank/DDBJ databases">
        <title>Cloning of human full-length CDSs in BD Creator(TM) system donor vector.</title>
        <authorList>
            <person name="Kalnine N."/>
            <person name="Chen X."/>
            <person name="Rolfs A."/>
            <person name="Halleck A."/>
            <person name="Hines L."/>
            <person name="Eisenstein S."/>
            <person name="Koundinya M."/>
            <person name="Raphael J."/>
            <person name="Moreira D."/>
            <person name="Kelley T."/>
            <person name="LaBaer J."/>
            <person name="Lin Y."/>
            <person name="Phelan M."/>
            <person name="Farmer A."/>
        </authorList>
    </citation>
    <scope>NUCLEOTIDE SEQUENCE [LARGE SCALE MRNA] (ISOFORM 1)</scope>
</reference>
<reference key="3">
    <citation type="journal article" date="2004" name="Nat. Genet.">
        <title>Complete sequencing and characterization of 21,243 full-length human cDNAs.</title>
        <authorList>
            <person name="Ota T."/>
            <person name="Suzuki Y."/>
            <person name="Nishikawa T."/>
            <person name="Otsuki T."/>
            <person name="Sugiyama T."/>
            <person name="Irie R."/>
            <person name="Wakamatsu A."/>
            <person name="Hayashi K."/>
            <person name="Sato H."/>
            <person name="Nagai K."/>
            <person name="Kimura K."/>
            <person name="Makita H."/>
            <person name="Sekine M."/>
            <person name="Obayashi M."/>
            <person name="Nishi T."/>
            <person name="Shibahara T."/>
            <person name="Tanaka T."/>
            <person name="Ishii S."/>
            <person name="Yamamoto J."/>
            <person name="Saito K."/>
            <person name="Kawai Y."/>
            <person name="Isono Y."/>
            <person name="Nakamura Y."/>
            <person name="Nagahari K."/>
            <person name="Murakami K."/>
            <person name="Yasuda T."/>
            <person name="Iwayanagi T."/>
            <person name="Wagatsuma M."/>
            <person name="Shiratori A."/>
            <person name="Sudo H."/>
            <person name="Hosoiri T."/>
            <person name="Kaku Y."/>
            <person name="Kodaira H."/>
            <person name="Kondo H."/>
            <person name="Sugawara M."/>
            <person name="Takahashi M."/>
            <person name="Kanda K."/>
            <person name="Yokoi T."/>
            <person name="Furuya T."/>
            <person name="Kikkawa E."/>
            <person name="Omura Y."/>
            <person name="Abe K."/>
            <person name="Kamihara K."/>
            <person name="Katsuta N."/>
            <person name="Sato K."/>
            <person name="Tanikawa M."/>
            <person name="Yamazaki M."/>
            <person name="Ninomiya K."/>
            <person name="Ishibashi T."/>
            <person name="Yamashita H."/>
            <person name="Murakawa K."/>
            <person name="Fujimori K."/>
            <person name="Tanai H."/>
            <person name="Kimata M."/>
            <person name="Watanabe M."/>
            <person name="Hiraoka S."/>
            <person name="Chiba Y."/>
            <person name="Ishida S."/>
            <person name="Ono Y."/>
            <person name="Takiguchi S."/>
            <person name="Watanabe S."/>
            <person name="Yosida M."/>
            <person name="Hotuta T."/>
            <person name="Kusano J."/>
            <person name="Kanehori K."/>
            <person name="Takahashi-Fujii A."/>
            <person name="Hara H."/>
            <person name="Tanase T.-O."/>
            <person name="Nomura Y."/>
            <person name="Togiya S."/>
            <person name="Komai F."/>
            <person name="Hara R."/>
            <person name="Takeuchi K."/>
            <person name="Arita M."/>
            <person name="Imose N."/>
            <person name="Musashino K."/>
            <person name="Yuuki H."/>
            <person name="Oshima A."/>
            <person name="Sasaki N."/>
            <person name="Aotsuka S."/>
            <person name="Yoshikawa Y."/>
            <person name="Matsunawa H."/>
            <person name="Ichihara T."/>
            <person name="Shiohata N."/>
            <person name="Sano S."/>
            <person name="Moriya S."/>
            <person name="Momiyama H."/>
            <person name="Satoh N."/>
            <person name="Takami S."/>
            <person name="Terashima Y."/>
            <person name="Suzuki O."/>
            <person name="Nakagawa S."/>
            <person name="Senoh A."/>
            <person name="Mizoguchi H."/>
            <person name="Goto Y."/>
            <person name="Shimizu F."/>
            <person name="Wakebe H."/>
            <person name="Hishigaki H."/>
            <person name="Watanabe T."/>
            <person name="Sugiyama A."/>
            <person name="Takemoto M."/>
            <person name="Kawakami B."/>
            <person name="Yamazaki M."/>
            <person name="Watanabe K."/>
            <person name="Kumagai A."/>
            <person name="Itakura S."/>
            <person name="Fukuzumi Y."/>
            <person name="Fujimori Y."/>
            <person name="Komiyama M."/>
            <person name="Tashiro H."/>
            <person name="Tanigami A."/>
            <person name="Fujiwara T."/>
            <person name="Ono T."/>
            <person name="Yamada K."/>
            <person name="Fujii Y."/>
            <person name="Ozaki K."/>
            <person name="Hirao M."/>
            <person name="Ohmori Y."/>
            <person name="Kawabata A."/>
            <person name="Hikiji T."/>
            <person name="Kobatake N."/>
            <person name="Inagaki H."/>
            <person name="Ikema Y."/>
            <person name="Okamoto S."/>
            <person name="Okitani R."/>
            <person name="Kawakami T."/>
            <person name="Noguchi S."/>
            <person name="Itoh T."/>
            <person name="Shigeta K."/>
            <person name="Senba T."/>
            <person name="Matsumura K."/>
            <person name="Nakajima Y."/>
            <person name="Mizuno T."/>
            <person name="Morinaga M."/>
            <person name="Sasaki M."/>
            <person name="Togashi T."/>
            <person name="Oyama M."/>
            <person name="Hata H."/>
            <person name="Watanabe M."/>
            <person name="Komatsu T."/>
            <person name="Mizushima-Sugano J."/>
            <person name="Satoh T."/>
            <person name="Shirai Y."/>
            <person name="Takahashi Y."/>
            <person name="Nakagawa K."/>
            <person name="Okumura K."/>
            <person name="Nagase T."/>
            <person name="Nomura N."/>
            <person name="Kikuchi H."/>
            <person name="Masuho Y."/>
            <person name="Yamashita R."/>
            <person name="Nakai K."/>
            <person name="Yada T."/>
            <person name="Nakamura Y."/>
            <person name="Ohara O."/>
            <person name="Isogai T."/>
            <person name="Sugano S."/>
        </authorList>
    </citation>
    <scope>NUCLEOTIDE SEQUENCE [LARGE SCALE MRNA] (ISOFORM 2)</scope>
    <source>
        <tissue>Small intestine</tissue>
    </source>
</reference>
<reference key="4">
    <citation type="journal article" date="2004" name="Nature">
        <title>The DNA sequence and biology of human chromosome 19.</title>
        <authorList>
            <person name="Grimwood J."/>
            <person name="Gordon L.A."/>
            <person name="Olsen A.S."/>
            <person name="Terry A."/>
            <person name="Schmutz J."/>
            <person name="Lamerdin J.E."/>
            <person name="Hellsten U."/>
            <person name="Goodstein D."/>
            <person name="Couronne O."/>
            <person name="Tran-Gyamfi M."/>
            <person name="Aerts A."/>
            <person name="Altherr M."/>
            <person name="Ashworth L."/>
            <person name="Bajorek E."/>
            <person name="Black S."/>
            <person name="Branscomb E."/>
            <person name="Caenepeel S."/>
            <person name="Carrano A.V."/>
            <person name="Caoile C."/>
            <person name="Chan Y.M."/>
            <person name="Christensen M."/>
            <person name="Cleland C.A."/>
            <person name="Copeland A."/>
            <person name="Dalin E."/>
            <person name="Dehal P."/>
            <person name="Denys M."/>
            <person name="Detter J.C."/>
            <person name="Escobar J."/>
            <person name="Flowers D."/>
            <person name="Fotopulos D."/>
            <person name="Garcia C."/>
            <person name="Georgescu A.M."/>
            <person name="Glavina T."/>
            <person name="Gomez M."/>
            <person name="Gonzales E."/>
            <person name="Groza M."/>
            <person name="Hammon N."/>
            <person name="Hawkins T."/>
            <person name="Haydu L."/>
            <person name="Ho I."/>
            <person name="Huang W."/>
            <person name="Israni S."/>
            <person name="Jett J."/>
            <person name="Kadner K."/>
            <person name="Kimball H."/>
            <person name="Kobayashi A."/>
            <person name="Larionov V."/>
            <person name="Leem S.-H."/>
            <person name="Lopez F."/>
            <person name="Lou Y."/>
            <person name="Lowry S."/>
            <person name="Malfatti S."/>
            <person name="Martinez D."/>
            <person name="McCready P.M."/>
            <person name="Medina C."/>
            <person name="Morgan J."/>
            <person name="Nelson K."/>
            <person name="Nolan M."/>
            <person name="Ovcharenko I."/>
            <person name="Pitluck S."/>
            <person name="Pollard M."/>
            <person name="Popkie A.P."/>
            <person name="Predki P."/>
            <person name="Quan G."/>
            <person name="Ramirez L."/>
            <person name="Rash S."/>
            <person name="Retterer J."/>
            <person name="Rodriguez A."/>
            <person name="Rogers S."/>
            <person name="Salamov A."/>
            <person name="Salazar A."/>
            <person name="She X."/>
            <person name="Smith D."/>
            <person name="Slezak T."/>
            <person name="Solovyev V."/>
            <person name="Thayer N."/>
            <person name="Tice H."/>
            <person name="Tsai M."/>
            <person name="Ustaszewska A."/>
            <person name="Vo N."/>
            <person name="Wagner M."/>
            <person name="Wheeler J."/>
            <person name="Wu K."/>
            <person name="Xie G."/>
            <person name="Yang J."/>
            <person name="Dubchak I."/>
            <person name="Furey T.S."/>
            <person name="DeJong P."/>
            <person name="Dickson M."/>
            <person name="Gordon D."/>
            <person name="Eichler E.E."/>
            <person name="Pennacchio L.A."/>
            <person name="Richardson P."/>
            <person name="Stubbs L."/>
            <person name="Rokhsar D.S."/>
            <person name="Myers R.M."/>
            <person name="Rubin E.M."/>
            <person name="Lucas S.M."/>
        </authorList>
    </citation>
    <scope>NUCLEOTIDE SEQUENCE [LARGE SCALE GENOMIC DNA]</scope>
</reference>
<reference key="5">
    <citation type="submission" date="2005-09" db="EMBL/GenBank/DDBJ databases">
        <authorList>
            <person name="Mural R.J."/>
            <person name="Istrail S."/>
            <person name="Sutton G.G."/>
            <person name="Florea L."/>
            <person name="Halpern A.L."/>
            <person name="Mobarry C.M."/>
            <person name="Lippert R."/>
            <person name="Walenz B."/>
            <person name="Shatkay H."/>
            <person name="Dew I."/>
            <person name="Miller J.R."/>
            <person name="Flanigan M.J."/>
            <person name="Edwards N.J."/>
            <person name="Bolanos R."/>
            <person name="Fasulo D."/>
            <person name="Halldorsson B.V."/>
            <person name="Hannenhalli S."/>
            <person name="Turner R."/>
            <person name="Yooseph S."/>
            <person name="Lu F."/>
            <person name="Nusskern D.R."/>
            <person name="Shue B.C."/>
            <person name="Zheng X.H."/>
            <person name="Zhong F."/>
            <person name="Delcher A.L."/>
            <person name="Huson D.H."/>
            <person name="Kravitz S.A."/>
            <person name="Mouchard L."/>
            <person name="Reinert K."/>
            <person name="Remington K.A."/>
            <person name="Clark A.G."/>
            <person name="Waterman M.S."/>
            <person name="Eichler E.E."/>
            <person name="Adams M.D."/>
            <person name="Hunkapiller M.W."/>
            <person name="Myers E.W."/>
            <person name="Venter J.C."/>
        </authorList>
    </citation>
    <scope>NUCLEOTIDE SEQUENCE [LARGE SCALE GENOMIC DNA]</scope>
</reference>
<reference key="6">
    <citation type="journal article" date="2004" name="Genome Res.">
        <title>The status, quality, and expansion of the NIH full-length cDNA project: the Mammalian Gene Collection (MGC).</title>
        <authorList>
            <consortium name="The MGC Project Team"/>
        </authorList>
    </citation>
    <scope>NUCLEOTIDE SEQUENCE [LARGE SCALE MRNA] (ISOFORM 1)</scope>
    <source>
        <tissue>Cervix</tissue>
    </source>
</reference>
<reference key="7">
    <citation type="journal article" date="2001" name="Science">
        <title>Delineation of mRNA export pathways by the use of cell-permeable peptides.</title>
        <authorList>
            <person name="Gallouzi I.-E."/>
            <person name="Steitz J.A."/>
        </authorList>
    </citation>
    <scope>INTERACTION WITH ANP32A</scope>
</reference>
<reference key="8">
    <citation type="journal article" date="2002" name="J. Biol. Chem.">
        <title>Lipopolysaccharide-induced methylation of HuR, an mRNA-stabilizing protein, by CARM1. Coactivator-associated arginine methyltransferase.</title>
        <authorList>
            <person name="Li H."/>
            <person name="Park S."/>
            <person name="Kilburn B."/>
            <person name="Jelinek M.A."/>
            <person name="Henschen-Edman A."/>
            <person name="Aswad D.W."/>
            <person name="Stallcup M.R."/>
            <person name="Laird-Offringa I.A."/>
        </authorList>
    </citation>
    <scope>METHYLATION AT ARG-217</scope>
</reference>
<reference key="9">
    <citation type="journal article" date="2003" name="Mol. Cell. Biol.">
        <title>Stabilization of urokinase and urokinase receptor mRNAs by HuR is linked to its cytoplasmic accumulation induced by activated mitogen-activated protein kinase-activated protein kinase 2.</title>
        <authorList>
            <person name="Tran H."/>
            <person name="Maurer F."/>
            <person name="Nagamine Y."/>
        </authorList>
    </citation>
    <scope>FUNCTION</scope>
    <scope>RNA-BINDING</scope>
    <scope>SUBCELLULAR LOCATION</scope>
    <scope>PHOSPHORYLATION BY MAPKAPK2</scope>
</reference>
<reference key="10">
    <citation type="journal article" date="2003" name="Nature">
        <title>Proteomic characterization of the human centrosome by protein correlation profiling.</title>
        <authorList>
            <person name="Andersen J.S."/>
            <person name="Wilkinson C.J."/>
            <person name="Mayor T."/>
            <person name="Mortensen P."/>
            <person name="Nigg E.A."/>
            <person name="Mann M."/>
        </authorList>
    </citation>
    <scope>IDENTIFICATION BY MASS SPECTROMETRY</scope>
    <source>
        <tissue>Lymphoblast</tissue>
    </source>
</reference>
<reference key="11">
    <citation type="journal article" date="2004" name="Mol. Cell">
        <title>Facilitation of mRNA deadenylation and decay by the exosome-bound, DExH protein RHAU.</title>
        <authorList>
            <person name="Tran H."/>
            <person name="Schilling M."/>
            <person name="Wirbelauer C."/>
            <person name="Hess D."/>
            <person name="Nagamine Y."/>
        </authorList>
    </citation>
    <scope>INTERACTION WITH DHX36 AND ILF3</scope>
    <scope>RNA-BINDING</scope>
</reference>
<reference key="12">
    <citation type="journal article" date="2006" name="Cell">
        <title>Global, in vivo, and site-specific phosphorylation dynamics in signaling networks.</title>
        <authorList>
            <person name="Olsen J.V."/>
            <person name="Blagoev B."/>
            <person name="Gnad F."/>
            <person name="Macek B."/>
            <person name="Kumar C."/>
            <person name="Mortensen P."/>
            <person name="Mann M."/>
        </authorList>
    </citation>
    <scope>IDENTIFICATION BY MASS SPECTROMETRY [LARGE SCALE ANALYSIS]</scope>
    <source>
        <tissue>Cervix carcinoma</tissue>
    </source>
</reference>
<reference key="13">
    <citation type="journal article" date="2007" name="EMBO Rep.">
        <title>Proteomic and functional analysis of Argonaute-containing mRNA-protein complexes in human cells.</title>
        <authorList>
            <person name="Hoeck J."/>
            <person name="Weinmann L."/>
            <person name="Ender C."/>
            <person name="Ruedel S."/>
            <person name="Kremmer E."/>
            <person name="Raabe M."/>
            <person name="Urlaub H."/>
            <person name="Meister G."/>
        </authorList>
    </citation>
    <scope>INTERACTION WITH AGO1 AND AGO2</scope>
</reference>
<reference key="14">
    <citation type="journal article" date="2007" name="J. Proteome Res.">
        <title>Improved titanium dioxide enrichment of phosphopeptides from HeLa cells and high confident phosphopeptide identification by cross-validation of MS/MS and MS/MS/MS spectra.</title>
        <authorList>
            <person name="Yu L.R."/>
            <person name="Zhu Z."/>
            <person name="Chan K.C."/>
            <person name="Issaq H.J."/>
            <person name="Dimitrov D.S."/>
            <person name="Veenstra T.D."/>
        </authorList>
    </citation>
    <scope>IDENTIFICATION BY MASS SPECTROMETRY [LARGE SCALE ANALYSIS]</scope>
    <source>
        <tissue>Cervix carcinoma</tissue>
    </source>
</reference>
<reference key="15">
    <citation type="journal article" date="2007" name="Nat. Chem. Biol.">
        <title>Identification and mechanistic characterization of low-molecular-weight inhibitors for HuR.</title>
        <authorList>
            <person name="Meisner N.C."/>
            <person name="Hintersteiner M."/>
            <person name="Mueller K."/>
            <person name="Bauer R."/>
            <person name="Seifert J.M."/>
            <person name="Naegeli H.U."/>
            <person name="Ottl J."/>
            <person name="Oberer L."/>
            <person name="Guenat C."/>
            <person name="Moss S."/>
            <person name="Harrer N."/>
            <person name="Woisetschlaeger M."/>
            <person name="Buehler C."/>
            <person name="Uhl V."/>
            <person name="Auer M."/>
        </authorList>
    </citation>
    <scope>FUNCTION</scope>
    <scope>SUBCELLULAR LOCATION</scope>
    <scope>SUBUNIT</scope>
</reference>
<reference key="16">
    <citation type="journal article" date="2008" name="Biochim. Biophys. Acta">
        <title>Novel tyrosine phosphorylated and cardiolipin-binding protein CLPABP functions as mitochondrial RNA granule.</title>
        <authorList>
            <person name="Sano E."/>
            <person name="Shono S."/>
            <person name="Tashiro K."/>
            <person name="Konishi H."/>
            <person name="Yamauchi E."/>
            <person name="Taniguchi H."/>
        </authorList>
    </citation>
    <scope>INTERACTION WITH PLEKHN1</scope>
</reference>
<reference key="17">
    <citation type="journal article" date="2008" name="Hepatology">
        <title>Natural antisense transcript stabilizes inducible nitric oxide synthase messenger RNA in rat hepatocytes.</title>
        <authorList>
            <person name="Matsui K."/>
            <person name="Nishizawa M."/>
            <person name="Ozaki T."/>
            <person name="Kimura T."/>
            <person name="Hashimoto I."/>
            <person name="Yamada M."/>
            <person name="Kaibori M."/>
            <person name="Kamiyama Y."/>
            <person name="Ito S."/>
            <person name="Okumura T."/>
        </authorList>
    </citation>
    <scope>INTERACTION WITH HNRNPL</scope>
</reference>
<reference key="18">
    <citation type="journal article" date="2008" name="J. Proteome Res.">
        <title>Combining protein-based IMAC, peptide-based IMAC, and MudPIT for efficient phosphoproteomic analysis.</title>
        <authorList>
            <person name="Cantin G.T."/>
            <person name="Yi W."/>
            <person name="Lu B."/>
            <person name="Park S.K."/>
            <person name="Xu T."/>
            <person name="Lee J.-D."/>
            <person name="Yates J.R. III"/>
        </authorList>
    </citation>
    <scope>IDENTIFICATION BY MASS SPECTROMETRY [LARGE SCALE ANALYSIS]</scope>
    <source>
        <tissue>Cervix carcinoma</tissue>
    </source>
</reference>
<reference key="19">
    <citation type="journal article" date="2008" name="Mol. Cell. Biol.">
        <title>Posttranslational modification of the AU-rich element binding protein HuR by protein kinase Cdelta elicits angiotensin II-induced stabilization and nuclear export of cyclooxygenase 2 mRNA.</title>
        <authorList>
            <person name="Doller A."/>
            <person name="Akool E.-S."/>
            <person name="Huwiler A."/>
            <person name="Mueller R."/>
            <person name="Radeke H.H."/>
            <person name="Pfeilschifter J."/>
            <person name="Eberhardt W."/>
        </authorList>
    </citation>
    <scope>RNA-BINDING</scope>
    <scope>FUNCTION</scope>
    <scope>SUBCELLULAR LOCATION</scope>
    <scope>PHOSPHORYLATION AT SER-158; SER-221 AND SER-318</scope>
    <scope>MUTAGENESIS OF SER-158; SER-221 AND SER-318</scope>
</reference>
<reference key="20">
    <citation type="journal article" date="2008" name="Proc. Natl. Acad. Sci. U.S.A.">
        <title>A quantitative atlas of mitotic phosphorylation.</title>
        <authorList>
            <person name="Dephoure N."/>
            <person name="Zhou C."/>
            <person name="Villen J."/>
            <person name="Beausoleil S.A."/>
            <person name="Bakalarski C.E."/>
            <person name="Elledge S.J."/>
            <person name="Gygi S.P."/>
        </authorList>
    </citation>
    <scope>PHOSPHORYLATION [LARGE SCALE ANALYSIS] AT SER-202</scope>
    <scope>IDENTIFICATION BY MASS SPECTROMETRY [LARGE SCALE ANALYSIS]</scope>
    <source>
        <tissue>Cervix carcinoma</tissue>
    </source>
</reference>
<reference key="21">
    <citation type="journal article" date="2009" name="Nat. Biotechnol.">
        <title>Rapid and systematic analysis of the RNA recognition specificities of RNA-binding proteins.</title>
        <authorList>
            <person name="Ray D."/>
            <person name="Kazan H."/>
            <person name="Chan E.T."/>
            <person name="Pena Castillo L."/>
            <person name="Chaudhry S."/>
            <person name="Talukder S."/>
            <person name="Blencowe B.J."/>
            <person name="Morris Q."/>
            <person name="Hughes T.R."/>
        </authorList>
    </citation>
    <scope>RNA-BINDING</scope>
</reference>
<reference key="22">
    <citation type="journal article" date="2009" name="RNA">
        <title>Control of c-myc mRNA stability by IGF2BP1-associated cytoplasmic RNPs.</title>
        <authorList>
            <person name="Weidensdorfer D."/>
            <person name="Stoehr N."/>
            <person name="Baude A."/>
            <person name="Lederer M."/>
            <person name="Koehn M."/>
            <person name="Schierhorn A."/>
            <person name="Buchmeier S."/>
            <person name="Wahle E."/>
            <person name="Huettelmaiery S."/>
        </authorList>
    </citation>
    <scope>FUNCTION</scope>
    <scope>IDENTIFICATION IN A MRNP COMPLEX</scope>
    <scope>SUBCELLULAR LOCATION</scope>
    <scope>IDENTIFICATION BY MASS SPECTROMETRY</scope>
</reference>
<reference key="23">
    <citation type="journal article" date="2009" name="Sci. Signal.">
        <title>Quantitative phosphoproteomic analysis of T cell receptor signaling reveals system-wide modulation of protein-protein interactions.</title>
        <authorList>
            <person name="Mayya V."/>
            <person name="Lundgren D.H."/>
            <person name="Hwang S.-I."/>
            <person name="Rezaul K."/>
            <person name="Wu L."/>
            <person name="Eng J.K."/>
            <person name="Rodionov V."/>
            <person name="Han D.K."/>
        </authorList>
    </citation>
    <scope>PHOSPHORYLATION [LARGE SCALE ANALYSIS] AT SER-202</scope>
    <scope>IDENTIFICATION BY MASS SPECTROMETRY [LARGE SCALE ANALYSIS]</scope>
    <source>
        <tissue>Leukemic T-cell</tissue>
    </source>
</reference>
<reference key="24">
    <citation type="journal article" date="2010" name="Sci. Signal.">
        <title>Quantitative phosphoproteomics reveals widespread full phosphorylation site occupancy during mitosis.</title>
        <authorList>
            <person name="Olsen J.V."/>
            <person name="Vermeulen M."/>
            <person name="Santamaria A."/>
            <person name="Kumar C."/>
            <person name="Miller M.L."/>
            <person name="Jensen L.J."/>
            <person name="Gnad F."/>
            <person name="Cox J."/>
            <person name="Jensen T.S."/>
            <person name="Nigg E.A."/>
            <person name="Brunak S."/>
            <person name="Mann M."/>
        </authorList>
    </citation>
    <scope>PHOSPHORYLATION [LARGE SCALE ANALYSIS] AT SER-202</scope>
    <scope>IDENTIFICATION BY MASS SPECTROMETRY [LARGE SCALE ANALYSIS]</scope>
    <source>
        <tissue>Cervix carcinoma</tissue>
    </source>
</reference>
<reference key="25">
    <citation type="journal article" date="2011" name="BMC Syst. Biol.">
        <title>Initial characterization of the human central proteome.</title>
        <authorList>
            <person name="Burkard T.R."/>
            <person name="Planyavsky M."/>
            <person name="Kaupe I."/>
            <person name="Breitwieser F.P."/>
            <person name="Buerckstuemmer T."/>
            <person name="Bennett K.L."/>
            <person name="Superti-Furga G."/>
            <person name="Colinge J."/>
        </authorList>
    </citation>
    <scope>IDENTIFICATION BY MASS SPECTROMETRY [LARGE SCALE ANALYSIS]</scope>
</reference>
<reference key="26">
    <citation type="journal article" date="2011" name="Sci. Signal.">
        <title>System-wide temporal characterization of the proteome and phosphoproteome of human embryonic stem cell differentiation.</title>
        <authorList>
            <person name="Rigbolt K.T."/>
            <person name="Prokhorova T.A."/>
            <person name="Akimov V."/>
            <person name="Henningsen J."/>
            <person name="Johansen P.T."/>
            <person name="Kratchmarova I."/>
            <person name="Kassem M."/>
            <person name="Mann M."/>
            <person name="Olsen J.V."/>
            <person name="Blagoev B."/>
        </authorList>
    </citation>
    <scope>ACETYLATION [LARGE SCALE ANALYSIS] AT SER-2</scope>
    <scope>PHOSPHORYLATION [LARGE SCALE ANALYSIS] AT SER-2 AND SER-202</scope>
    <scope>CLEAVAGE OF INITIATOR METHIONINE [LARGE SCALE ANALYSIS]</scope>
    <scope>IDENTIFICATION BY MASS SPECTROMETRY [LARGE SCALE ANALYSIS]</scope>
</reference>
<reference key="27">
    <citation type="journal article" date="2013" name="Biol. Chem.">
        <title>Subcellular localization and RNP formation of IGF2BPs (IGF2 mRNA-binding proteins) is modulated by distinct RNA-binding domains.</title>
        <authorList>
            <person name="Wachter K."/>
            <person name="Kohn M."/>
            <person name="Stohr N."/>
            <person name="Huttelmaier S."/>
        </authorList>
    </citation>
    <scope>INTERACTION WITH IGF2BP1; IGF2BP2 AND IGF2BP3</scope>
</reference>
<reference key="28">
    <citation type="journal article" date="2013" name="J. Proteome Res.">
        <title>Toward a comprehensive characterization of a human cancer cell phosphoproteome.</title>
        <authorList>
            <person name="Zhou H."/>
            <person name="Di Palma S."/>
            <person name="Preisinger C."/>
            <person name="Peng M."/>
            <person name="Polat A.N."/>
            <person name="Heck A.J."/>
            <person name="Mohammed S."/>
        </authorList>
    </citation>
    <scope>PHOSPHORYLATION [LARGE SCALE ANALYSIS] AT SER-100; SER-197 AND SER-202</scope>
    <scope>IDENTIFICATION BY MASS SPECTROMETRY [LARGE SCALE ANALYSIS]</scope>
    <source>
        <tissue>Cervix carcinoma</tissue>
        <tissue>Erythroleukemia</tissue>
    </source>
</reference>
<reference key="29">
    <citation type="journal article" date="2014" name="Mol. Cell. Proteomics">
        <title>Immunoaffinity enrichment and mass spectrometry analysis of protein methylation.</title>
        <authorList>
            <person name="Guo A."/>
            <person name="Gu H."/>
            <person name="Zhou J."/>
            <person name="Mulhern D."/>
            <person name="Wang Y."/>
            <person name="Lee K.A."/>
            <person name="Yang V."/>
            <person name="Aguiar M."/>
            <person name="Kornhauser J."/>
            <person name="Jia X."/>
            <person name="Ren J."/>
            <person name="Beausoleil S.A."/>
            <person name="Silva J.C."/>
            <person name="Vemulapalli V."/>
            <person name="Bedford M.T."/>
            <person name="Comb M.J."/>
        </authorList>
    </citation>
    <scope>METHYLATION [LARGE SCALE ANALYSIS] AT ARG-217</scope>
    <scope>IDENTIFICATION BY MASS SPECTROMETRY [LARGE SCALE ANALYSIS]</scope>
    <source>
        <tissue>Colon carcinoma</tissue>
    </source>
</reference>
<reference key="30">
    <citation type="journal article" date="2015" name="Proteomics">
        <title>N-terminome analysis of the human mitochondrial proteome.</title>
        <authorList>
            <person name="Vaca Jacome A.S."/>
            <person name="Rabilloud T."/>
            <person name="Schaeffer-Reiss C."/>
            <person name="Rompais M."/>
            <person name="Ayoub D."/>
            <person name="Lane L."/>
            <person name="Bairoch A."/>
            <person name="Van Dorsselaer A."/>
            <person name="Carapito C."/>
        </authorList>
    </citation>
    <scope>IDENTIFICATION BY MASS SPECTROMETRY [LARGE SCALE ANALYSIS]</scope>
</reference>
<reference key="31">
    <citation type="journal article" date="2016" name="Biochim. Biophys. Acta">
        <title>Antagonizing effect of CLPABP on the function of HuR as a regulator of ARE-containing leptin mRNA stability and the effect of its depletion on obesity in old male mouse.</title>
        <authorList>
            <person name="Nishino T."/>
            <person name="Matsunaga R."/>
            <person name="Jikihara H."/>
            <person name="Uchida M."/>
            <person name="Maeda A."/>
            <person name="Qi G."/>
            <person name="Abe T."/>
            <person name="Kiyonari H."/>
            <person name="Tashiro S."/>
            <person name="Inagaki-Ohara K."/>
            <person name="Shimamoto F."/>
            <person name="Konishi H."/>
        </authorList>
    </citation>
    <scope>INTERACTION WITH PLEKHN1</scope>
</reference>
<reference key="32">
    <citation type="journal article" date="2017" name="J. Virol.">
        <title>IRAV (FLJ11286), an Interferon-Stimulated Gene with Antiviral Activity against Dengue Virus, Interacts with MOV10.</title>
        <authorList>
            <person name="Balinsky C.A."/>
            <person name="Schmeisser H."/>
            <person name="Wells A.I."/>
            <person name="Ganesan S."/>
            <person name="Jin T."/>
            <person name="Singh K."/>
            <person name="Zoon K.C."/>
        </authorList>
    </citation>
    <scope>INTERACTION WITH SHFL</scope>
</reference>
<reference key="33">
    <citation type="journal article" date="2017" name="Nat. Struct. Mol. Biol.">
        <title>Site-specific mapping of the human SUMO proteome reveals co-modification with phosphorylation.</title>
        <authorList>
            <person name="Hendriks I.A."/>
            <person name="Lyon D."/>
            <person name="Young C."/>
            <person name="Jensen L.J."/>
            <person name="Vertegaal A.C."/>
            <person name="Nielsen M.L."/>
        </authorList>
    </citation>
    <scope>SUMOYLATION [LARGE SCALE ANALYSIS] AT LYS-191</scope>
    <scope>IDENTIFICATION BY MASS SPECTROMETRY [LARGE SCALE ANALYSIS]</scope>
</reference>
<reference key="34">
    <citation type="journal article" date="2018" name="Biochem. Biophys. Res. Commun.">
        <title>Role of N-myristoylation in stability and subcellular localization of the CLPABP protein.</title>
        <authorList>
            <person name="Maeda A."/>
            <person name="Uchida M."/>
            <person name="Nishikawa S."/>
            <person name="Nishino T."/>
            <person name="Konishi H."/>
        </authorList>
    </citation>
    <scope>FUNCTION</scope>
</reference>
<reference key="35">
    <citation type="journal article" date="2018" name="Cell Rep.">
        <title>FXR1 is an IL-19-responsive RNA-binding protein that destabilizes pro-inflammatory transcripts in vascular smooth muscle cells.</title>
        <authorList>
            <person name="Herman A.B."/>
            <person name="Vrakas C.N."/>
            <person name="Ray M."/>
            <person name="Kelemen S.E."/>
            <person name="Sweredoski M.J."/>
            <person name="Moradian A."/>
            <person name="Haines D.S."/>
            <person name="Autieri M.V."/>
        </authorList>
    </citation>
    <scope>INTERACTION WITH FXR1</scope>
</reference>
<reference key="36">
    <citation type="journal article" date="2018" name="Nat. Cell Biol.">
        <title>Recognition of RNA N6-methyladenosine by IGF2BP proteins enhances mRNA stability and translation.</title>
        <authorList>
            <person name="Huang H."/>
            <person name="Weng H."/>
            <person name="Sun W."/>
            <person name="Qin X."/>
            <person name="Shi H."/>
            <person name="Wu H."/>
            <person name="Zhao B.S."/>
            <person name="Mesquita A."/>
            <person name="Liu C."/>
            <person name="Yuan C.L."/>
            <person name="Hu Y.C."/>
            <person name="Huettelmaier S."/>
            <person name="Skibbe J.R."/>
            <person name="Su R."/>
            <person name="Deng X."/>
            <person name="Dong L."/>
            <person name="Sun M."/>
            <person name="Li C."/>
            <person name="Nachtergaele S."/>
            <person name="Wang Y."/>
            <person name="Hu C."/>
            <person name="Ferchen K."/>
            <person name="Greis K.D."/>
            <person name="Jiang X."/>
            <person name="Wei M."/>
            <person name="Qu L."/>
            <person name="Guan J.L."/>
            <person name="He C."/>
            <person name="Yang J."/>
            <person name="Chen J."/>
        </authorList>
    </citation>
    <scope>INTERACTION WITH IGF2BP1; IGF2BP2 AND IGF2BP3</scope>
    <scope>SUBCELLULAR LOCATION</scope>
</reference>
<reference key="37">
    <citation type="journal article" date="2019" name="Nat. Cell Biol.">
        <title>5-methylcytosine promotes pathogenesis of bladder cancer through stabilizing mRNAs.</title>
        <authorList>
            <person name="Chen X."/>
            <person name="Li A."/>
            <person name="Sun B.F."/>
            <person name="Yang Y."/>
            <person name="Han Y.N."/>
            <person name="Yuan X."/>
            <person name="Chen R.X."/>
            <person name="Wei W.S."/>
            <person name="Liu Y."/>
            <person name="Gao C.C."/>
            <person name="Chen Y.S."/>
            <person name="Zhang M."/>
            <person name="Ma X.D."/>
            <person name="Liu Z.W."/>
            <person name="Luo J.H."/>
            <person name="Lyu C."/>
            <person name="Wang H.L."/>
            <person name="Ma J."/>
            <person name="Zhao Y.L."/>
            <person name="Zhou F.J."/>
            <person name="Huang Y."/>
            <person name="Xie D."/>
            <person name="Yang Y.G."/>
        </authorList>
    </citation>
    <scope>FUNCTION</scope>
    <scope>INTERACTION WITH YBX1</scope>
</reference>
<reference key="38">
    <citation type="journal article" date="2020" name="Nat. Commun.">
        <title>An oncopeptide regulates m6A recognition by the m6A reader IGF2BP1 and tumorigenesis.</title>
        <authorList>
            <person name="Zhu S."/>
            <person name="Wang J.Z."/>
            <person name="Chen D."/>
            <person name="He Y.T."/>
            <person name="Meng N."/>
            <person name="Chen M."/>
            <person name="Lu R.X."/>
            <person name="Chen X.H."/>
            <person name="Zhang X.L."/>
            <person name="Yan G.R."/>
        </authorList>
    </citation>
    <scope>FUNCTION</scope>
    <scope>INTERACTION WITH IGF2BP1</scope>
</reference>
<reference key="39">
    <citation type="journal article" date="2010" name="J. Mol. Biol.">
        <title>The X-ray crystal structure of the first RNA recognition motif and site-directed mutagenesis suggest a possible HuR redox sensing mechanism.</title>
        <authorList>
            <person name="Benoit R.M."/>
            <person name="Meisner N.C."/>
            <person name="Kallen J."/>
            <person name="Graff P."/>
            <person name="Hemmig R."/>
            <person name="Cebe R."/>
            <person name="Ostermeier C."/>
            <person name="Widmer H."/>
            <person name="Auer M."/>
        </authorList>
    </citation>
    <scope>X-RAY CRYSTALLOGRAPHY (2.00 ANGSTROMS) OF 18-99</scope>
    <scope>SUBUNIT</scope>
</reference>
<reference key="40">
    <citation type="journal article" date="2013" name="Acta Crystallogr. D">
        <title>The structure of the ARE-binding domains of Hu antigen R (HuR) undergoes conformational changes during RNA binding.</title>
        <authorList>
            <person name="Wang H."/>
            <person name="Zeng F."/>
            <person name="Liu Q."/>
            <person name="Liu H."/>
            <person name="Liu Z."/>
            <person name="Niu L."/>
            <person name="Teng M."/>
            <person name="Li X."/>
        </authorList>
    </citation>
    <scope>X-RAY CRYSTALLOGRAPHY (2.00 ANGSTROMS) OF 18-186 OF APOPROTEIN AND IN COMPLEX WITH RNA</scope>
    <scope>FUNCTION</scope>
    <scope>RNA-BINDING</scope>
    <scope>DOMAIN</scope>
</reference>
<proteinExistence type="evidence at protein level"/>
<gene>
    <name type="primary">ELAVL1</name>
    <name type="synonym">HUR</name>
</gene>